<protein>
    <recommendedName>
        <fullName evidence="1">Bifunctional protein Aas</fullName>
    </recommendedName>
    <domain>
        <recommendedName>
            <fullName evidence="1">2-acylglycerophosphoethanolamine acyltransferase</fullName>
            <ecNumber evidence="1">2.3.1.40</ecNumber>
        </recommendedName>
        <alternativeName>
            <fullName evidence="1">2-acyl-GPE acyltransferase</fullName>
        </alternativeName>
        <alternativeName>
            <fullName evidence="1">Acyl-[acyl-carrier-protein]--phospholipid O-acyltransferase</fullName>
        </alternativeName>
    </domain>
    <domain>
        <recommendedName>
            <fullName evidence="1">Acyl-[acyl-carrier-protein] synthetase</fullName>
            <ecNumber evidence="1">6.2.1.20</ecNumber>
        </recommendedName>
        <alternativeName>
            <fullName evidence="1">Acyl-ACP synthetase</fullName>
        </alternativeName>
        <alternativeName>
            <fullName evidence="1">Long-chain-fatty-acid--[acyl-carrier-protein] ligase</fullName>
        </alternativeName>
    </domain>
</protein>
<name>AAS_YERE8</name>
<proteinExistence type="inferred from homology"/>
<organism>
    <name type="scientific">Yersinia enterocolitica serotype O:8 / biotype 1B (strain NCTC 13174 / 8081)</name>
    <dbReference type="NCBI Taxonomy" id="393305"/>
    <lineage>
        <taxon>Bacteria</taxon>
        <taxon>Pseudomonadati</taxon>
        <taxon>Pseudomonadota</taxon>
        <taxon>Gammaproteobacteria</taxon>
        <taxon>Enterobacterales</taxon>
        <taxon>Yersiniaceae</taxon>
        <taxon>Yersinia</taxon>
    </lineage>
</organism>
<gene>
    <name evidence="1" type="primary">aas</name>
    <name type="ordered locus">YE3327</name>
</gene>
<keyword id="KW-0012">Acyltransferase</keyword>
<keyword id="KW-0067">ATP-binding</keyword>
<keyword id="KW-0997">Cell inner membrane</keyword>
<keyword id="KW-1003">Cell membrane</keyword>
<keyword id="KW-0436">Ligase</keyword>
<keyword id="KW-0472">Membrane</keyword>
<keyword id="KW-0511">Multifunctional enzyme</keyword>
<keyword id="KW-0547">Nucleotide-binding</keyword>
<keyword id="KW-0808">Transferase</keyword>
<keyword id="KW-0812">Transmembrane</keyword>
<keyword id="KW-1133">Transmembrane helix</keyword>
<sequence length="718" mass="79473">MAYRLLRALFRGLFRVTIDGITDQFSHQKLIITPNHVSFLDGALLALFLPIKPVFAVYSNITESWYMRWLKPYVDFVALDPTKPMAIKHLVRMVEQGRPVVIFPEGRITVTGSLMKIYDGAAFVAAKSGAAVVPIRLEGPEFTRFGRLGDVLKVRWFPKISIHVLPATTLPMPQAPRARDRRVLAGERLHAIMMAARMAIVPRETLFEALLSAQTRYGRFKPCIEDISFKEDSYQTLLKKILGVSRILQRFTAQGEHVGMLLPNATITAAAIFGATLRGRIPALLNYTSGAKGLKSAITAASLKTIITSRQFLEKGKLTHLPEQVTEANWVYLEDLKDTVTLADKLWILFHLCCPRRAMVPQQADDSALILFTSGSEGNPKGVVHSHASLLANVEQIRTIADFTPRDRFMSSLPLFHAFGLTVGLFTPLMTGSRVFLYPSPLHYRVVPELVYDRNCTVLFGTSTFLGNYARFAHPYDFARLRYVVAGAEKLADSTKQIWQDKFGIRILEGYGVTECAPVVAINVPMAAKVNTVGRILPGMESRVIPVPGIEQGGRLQLRGPNIMRGYLRVEKPGVLEQPSAENTQGEQEAGWYDTGDIVAIDEQGFCTIRGRMKRFAKLAGEMVSLESVEQLVLRISPEGQHAAATKTDSAKGEALVLFTTDSEITREKLVKAARESGVPELAVPRDIRVVKALPLLGSGKPDFVTLSKMAEDPEMSA</sequence>
<evidence type="ECO:0000255" key="1">
    <source>
        <dbReference type="HAMAP-Rule" id="MF_01162"/>
    </source>
</evidence>
<feature type="chain" id="PRO_1000065645" description="Bifunctional protein Aas">
    <location>
        <begin position="1"/>
        <end position="718"/>
    </location>
</feature>
<feature type="transmembrane region" description="Helical" evidence="1">
    <location>
        <begin position="258"/>
        <end position="277"/>
    </location>
</feature>
<feature type="transmembrane region" description="Helical" evidence="1">
    <location>
        <begin position="409"/>
        <end position="433"/>
    </location>
</feature>
<feature type="region of interest" description="Acyltransferase">
    <location>
        <begin position="15"/>
        <end position="138"/>
    </location>
</feature>
<feature type="region of interest" description="AMP-binding">
    <location>
        <begin position="233"/>
        <end position="646"/>
    </location>
</feature>
<feature type="active site" evidence="1">
    <location>
        <position position="36"/>
    </location>
</feature>
<comment type="function">
    <text evidence="1">Plays a role in lysophospholipid acylation. Transfers fatty acids to the 1-position via an enzyme-bound acyl-ACP intermediate in the presence of ATP and magnesium. Its physiological function is to regenerate phosphatidylethanolamine from 2-acyl-glycero-3-phosphoethanolamine (2-acyl-GPE) formed by transacylation reactions or degradation by phospholipase A1.</text>
</comment>
<comment type="catalytic activity">
    <reaction evidence="1">
        <text>a 2-acyl-sn-glycero-3-phosphoethanolamine + a fatty acyl-[ACP] = a 1,2-diacyl-sn-glycero-3-phosphoethanolamine + holo-[ACP]</text>
        <dbReference type="Rhea" id="RHEA:10304"/>
        <dbReference type="Rhea" id="RHEA-COMP:9685"/>
        <dbReference type="Rhea" id="RHEA-COMP:14125"/>
        <dbReference type="ChEBI" id="CHEBI:64479"/>
        <dbReference type="ChEBI" id="CHEBI:64612"/>
        <dbReference type="ChEBI" id="CHEBI:65213"/>
        <dbReference type="ChEBI" id="CHEBI:138651"/>
        <dbReference type="EC" id="2.3.1.40"/>
    </reaction>
</comment>
<comment type="catalytic activity">
    <reaction evidence="1">
        <text>a long-chain fatty acid + holo-[ACP] + ATP = a long-chain fatty acyl-[ACP] + AMP + diphosphate</text>
        <dbReference type="Rhea" id="RHEA:45588"/>
        <dbReference type="Rhea" id="RHEA-COMP:9685"/>
        <dbReference type="Rhea" id="RHEA-COMP:12682"/>
        <dbReference type="ChEBI" id="CHEBI:30616"/>
        <dbReference type="ChEBI" id="CHEBI:33019"/>
        <dbReference type="ChEBI" id="CHEBI:57560"/>
        <dbReference type="ChEBI" id="CHEBI:64479"/>
        <dbReference type="ChEBI" id="CHEBI:133243"/>
        <dbReference type="ChEBI" id="CHEBI:456215"/>
        <dbReference type="EC" id="6.2.1.20"/>
    </reaction>
</comment>
<comment type="subcellular location">
    <subcellularLocation>
        <location evidence="1">Cell inner membrane</location>
        <topology evidence="1">Multi-pass membrane protein</topology>
    </subcellularLocation>
</comment>
<comment type="similarity">
    <text evidence="1">In the N-terminal section; belongs to the 2-acyl-GPE acetyltransferase family.</text>
</comment>
<comment type="similarity">
    <text evidence="1">In the C-terminal section; belongs to the ATP-dependent AMP-binding enzyme family.</text>
</comment>
<reference key="1">
    <citation type="journal article" date="2006" name="PLoS Genet.">
        <title>The complete genome sequence and comparative genome analysis of the high pathogenicity Yersinia enterocolitica strain 8081.</title>
        <authorList>
            <person name="Thomson N.R."/>
            <person name="Howard S."/>
            <person name="Wren B.W."/>
            <person name="Holden M.T.G."/>
            <person name="Crossman L."/>
            <person name="Challis G.L."/>
            <person name="Churcher C."/>
            <person name="Mungall K."/>
            <person name="Brooks K."/>
            <person name="Chillingworth T."/>
            <person name="Feltwell T."/>
            <person name="Abdellah Z."/>
            <person name="Hauser H."/>
            <person name="Jagels K."/>
            <person name="Maddison M."/>
            <person name="Moule S."/>
            <person name="Sanders M."/>
            <person name="Whitehead S."/>
            <person name="Quail M.A."/>
            <person name="Dougan G."/>
            <person name="Parkhill J."/>
            <person name="Prentice M.B."/>
        </authorList>
    </citation>
    <scope>NUCLEOTIDE SEQUENCE [LARGE SCALE GENOMIC DNA]</scope>
    <source>
        <strain>NCTC 13174 / 8081</strain>
    </source>
</reference>
<dbReference type="EC" id="2.3.1.40" evidence="1"/>
<dbReference type="EC" id="6.2.1.20" evidence="1"/>
<dbReference type="EMBL" id="AM286415">
    <property type="protein sequence ID" value="CAL13356.1"/>
    <property type="molecule type" value="Genomic_DNA"/>
</dbReference>
<dbReference type="RefSeq" id="WP_011816988.1">
    <property type="nucleotide sequence ID" value="NC_008800.1"/>
</dbReference>
<dbReference type="RefSeq" id="YP_001007500.1">
    <property type="nucleotide sequence ID" value="NC_008800.1"/>
</dbReference>
<dbReference type="SMR" id="A1JPF0"/>
<dbReference type="KEGG" id="yen:YE3327"/>
<dbReference type="PATRIC" id="fig|393305.7.peg.3535"/>
<dbReference type="eggNOG" id="COG0204">
    <property type="taxonomic scope" value="Bacteria"/>
</dbReference>
<dbReference type="eggNOG" id="COG0318">
    <property type="taxonomic scope" value="Bacteria"/>
</dbReference>
<dbReference type="HOGENOM" id="CLU_000022_59_8_6"/>
<dbReference type="OrthoDB" id="9803968at2"/>
<dbReference type="Proteomes" id="UP000000642">
    <property type="component" value="Chromosome"/>
</dbReference>
<dbReference type="GO" id="GO:0005886">
    <property type="term" value="C:plasma membrane"/>
    <property type="evidence" value="ECO:0007669"/>
    <property type="project" value="UniProtKB-SubCell"/>
</dbReference>
<dbReference type="GO" id="GO:0008779">
    <property type="term" value="F:acyl-[acyl-carrier-protein]-phospholipid O-acyltransferase activity"/>
    <property type="evidence" value="ECO:0007669"/>
    <property type="project" value="UniProtKB-UniRule"/>
</dbReference>
<dbReference type="GO" id="GO:0005524">
    <property type="term" value="F:ATP binding"/>
    <property type="evidence" value="ECO:0007669"/>
    <property type="project" value="UniProtKB-KW"/>
</dbReference>
<dbReference type="GO" id="GO:0008922">
    <property type="term" value="F:long-chain fatty acid [acyl-carrier-protein] ligase activity"/>
    <property type="evidence" value="ECO:0007669"/>
    <property type="project" value="UniProtKB-UniRule"/>
</dbReference>
<dbReference type="GO" id="GO:0031956">
    <property type="term" value="F:medium-chain fatty acid-CoA ligase activity"/>
    <property type="evidence" value="ECO:0007669"/>
    <property type="project" value="TreeGrafter"/>
</dbReference>
<dbReference type="GO" id="GO:0006631">
    <property type="term" value="P:fatty acid metabolic process"/>
    <property type="evidence" value="ECO:0007669"/>
    <property type="project" value="InterPro"/>
</dbReference>
<dbReference type="GO" id="GO:0008654">
    <property type="term" value="P:phospholipid biosynthetic process"/>
    <property type="evidence" value="ECO:0007669"/>
    <property type="project" value="InterPro"/>
</dbReference>
<dbReference type="CDD" id="cd07989">
    <property type="entry name" value="LPLAT_AGPAT-like"/>
    <property type="match status" value="1"/>
</dbReference>
<dbReference type="Gene3D" id="3.30.300.30">
    <property type="match status" value="1"/>
</dbReference>
<dbReference type="Gene3D" id="3.40.50.12780">
    <property type="entry name" value="N-terminal domain of ligase-like"/>
    <property type="match status" value="1"/>
</dbReference>
<dbReference type="HAMAP" id="MF_01162">
    <property type="entry name" value="Aas"/>
    <property type="match status" value="1"/>
</dbReference>
<dbReference type="InterPro" id="IPR023775">
    <property type="entry name" value="Aas"/>
</dbReference>
<dbReference type="InterPro" id="IPR025110">
    <property type="entry name" value="AMP-bd_C"/>
</dbReference>
<dbReference type="InterPro" id="IPR045851">
    <property type="entry name" value="AMP-bd_C_sf"/>
</dbReference>
<dbReference type="InterPro" id="IPR020845">
    <property type="entry name" value="AMP-binding_CS"/>
</dbReference>
<dbReference type="InterPro" id="IPR000873">
    <property type="entry name" value="AMP-dep_synth/lig_dom"/>
</dbReference>
<dbReference type="InterPro" id="IPR042099">
    <property type="entry name" value="ANL_N_sf"/>
</dbReference>
<dbReference type="InterPro" id="IPR002123">
    <property type="entry name" value="Plipid/glycerol_acylTrfase"/>
</dbReference>
<dbReference type="NCBIfam" id="NF005959">
    <property type="entry name" value="PRK08043.1"/>
    <property type="match status" value="1"/>
</dbReference>
<dbReference type="PANTHER" id="PTHR43201">
    <property type="entry name" value="ACYL-COA SYNTHETASE"/>
    <property type="match status" value="1"/>
</dbReference>
<dbReference type="PANTHER" id="PTHR43201:SF5">
    <property type="entry name" value="MEDIUM-CHAIN ACYL-COA LIGASE ACSF2, MITOCHONDRIAL"/>
    <property type="match status" value="1"/>
</dbReference>
<dbReference type="Pfam" id="PF01553">
    <property type="entry name" value="Acyltransferase"/>
    <property type="match status" value="1"/>
</dbReference>
<dbReference type="Pfam" id="PF00501">
    <property type="entry name" value="AMP-binding"/>
    <property type="match status" value="1"/>
</dbReference>
<dbReference type="Pfam" id="PF13193">
    <property type="entry name" value="AMP-binding_C"/>
    <property type="match status" value="1"/>
</dbReference>
<dbReference type="SMART" id="SM00563">
    <property type="entry name" value="PlsC"/>
    <property type="match status" value="1"/>
</dbReference>
<dbReference type="SUPFAM" id="SSF56801">
    <property type="entry name" value="Acetyl-CoA synthetase-like"/>
    <property type="match status" value="1"/>
</dbReference>
<dbReference type="SUPFAM" id="SSF69593">
    <property type="entry name" value="Glycerol-3-phosphate (1)-acyltransferase"/>
    <property type="match status" value="1"/>
</dbReference>
<dbReference type="PROSITE" id="PS00455">
    <property type="entry name" value="AMP_BINDING"/>
    <property type="match status" value="1"/>
</dbReference>
<accession>A1JPF0</accession>